<organism>
    <name type="scientific">Thiobacillus denitrificans (strain ATCC 25259 / T1)</name>
    <dbReference type="NCBI Taxonomy" id="292415"/>
    <lineage>
        <taxon>Bacteria</taxon>
        <taxon>Pseudomonadati</taxon>
        <taxon>Pseudomonadota</taxon>
        <taxon>Betaproteobacteria</taxon>
        <taxon>Nitrosomonadales</taxon>
        <taxon>Thiobacillaceae</taxon>
        <taxon>Thiobacillus</taxon>
    </lineage>
</organism>
<feature type="chain" id="PRO_0000301399" description="Phosphoglucosamine mutase">
    <location>
        <begin position="1"/>
        <end position="458"/>
    </location>
</feature>
<feature type="active site" description="Phosphoserine intermediate" evidence="1">
    <location>
        <position position="108"/>
    </location>
</feature>
<feature type="binding site" description="via phosphate group" evidence="1">
    <location>
        <position position="108"/>
    </location>
    <ligand>
        <name>Mg(2+)</name>
        <dbReference type="ChEBI" id="CHEBI:18420"/>
    </ligand>
</feature>
<feature type="binding site" evidence="1">
    <location>
        <position position="247"/>
    </location>
    <ligand>
        <name>Mg(2+)</name>
        <dbReference type="ChEBI" id="CHEBI:18420"/>
    </ligand>
</feature>
<feature type="binding site" evidence="1">
    <location>
        <position position="249"/>
    </location>
    <ligand>
        <name>Mg(2+)</name>
        <dbReference type="ChEBI" id="CHEBI:18420"/>
    </ligand>
</feature>
<feature type="binding site" evidence="1">
    <location>
        <position position="251"/>
    </location>
    <ligand>
        <name>Mg(2+)</name>
        <dbReference type="ChEBI" id="CHEBI:18420"/>
    </ligand>
</feature>
<feature type="modified residue" description="Phosphoserine" evidence="1">
    <location>
        <position position="108"/>
    </location>
</feature>
<name>GLMM_THIDA</name>
<accession>Q3SJR2</accession>
<protein>
    <recommendedName>
        <fullName evidence="1">Phosphoglucosamine mutase</fullName>
        <ecNumber evidence="1">5.4.2.10</ecNumber>
    </recommendedName>
</protein>
<comment type="function">
    <text evidence="1">Catalyzes the conversion of glucosamine-6-phosphate to glucosamine-1-phosphate.</text>
</comment>
<comment type="catalytic activity">
    <reaction evidence="1">
        <text>alpha-D-glucosamine 1-phosphate = D-glucosamine 6-phosphate</text>
        <dbReference type="Rhea" id="RHEA:23424"/>
        <dbReference type="ChEBI" id="CHEBI:58516"/>
        <dbReference type="ChEBI" id="CHEBI:58725"/>
        <dbReference type="EC" id="5.4.2.10"/>
    </reaction>
</comment>
<comment type="cofactor">
    <cofactor evidence="1">
        <name>Mg(2+)</name>
        <dbReference type="ChEBI" id="CHEBI:18420"/>
    </cofactor>
    <text evidence="1">Binds 1 Mg(2+) ion per subunit.</text>
</comment>
<comment type="PTM">
    <text evidence="1">Activated by phosphorylation.</text>
</comment>
<comment type="similarity">
    <text evidence="1">Belongs to the phosphohexose mutase family.</text>
</comment>
<gene>
    <name evidence="1" type="primary">glmM</name>
    <name type="ordered locus">Tbd_1135</name>
</gene>
<reference key="1">
    <citation type="journal article" date="2006" name="J. Bacteriol.">
        <title>The genome sequence of the obligately chemolithoautotrophic, facultatively anaerobic bacterium Thiobacillus denitrificans.</title>
        <authorList>
            <person name="Beller H.R."/>
            <person name="Chain P.S."/>
            <person name="Letain T.E."/>
            <person name="Chakicherla A."/>
            <person name="Larimer F.W."/>
            <person name="Richardson P.M."/>
            <person name="Coleman M.A."/>
            <person name="Wood A.P."/>
            <person name="Kelly D.P."/>
        </authorList>
    </citation>
    <scope>NUCLEOTIDE SEQUENCE [LARGE SCALE GENOMIC DNA]</scope>
    <source>
        <strain>ATCC 25259 / T1</strain>
    </source>
</reference>
<proteinExistence type="inferred from homology"/>
<sequence length="458" mass="48744">MGRKYFGTDGVRGKVGETPITPEFVMRLGYAAGKVLVSDRGSLPANEHPTVLIGKDTRISGYMLEAALEAGFTAAGVNVLMTGPMPTPAVAYLTRALRLQAGVVISASHNPFEDNGIKFFSASGQKLPDSVEEAIEAALDQPLATVAARQLGRARRIEDAAARYIEFCKSTFPNRLDLRGMRIVVDCAHGATYHVAPHVLHELGAEVVAIGNEPNGFNINEACGATHTPALADAVRAHHADIGISLDGDGDRLMMADAHGRIYDGDQLVYVIARHRLETGYMKGGVVGTLMTNLGTEHALARIHVPFERAKVGDRYVLKRLHANGWFLGGETSGHILCLDKHTTGDGIVSSLQVLRALRETGKTLDAFTADLETYPQVMINVPVVKGFRLSDAAAVTVAVADAESALNGSGRIVLRASGTEPLIRVMVEGRDGDLVRRTAEMIADAVRAAAAASDIAV</sequence>
<evidence type="ECO:0000255" key="1">
    <source>
        <dbReference type="HAMAP-Rule" id="MF_01554"/>
    </source>
</evidence>
<dbReference type="EC" id="5.4.2.10" evidence="1"/>
<dbReference type="EMBL" id="CP000116">
    <property type="protein sequence ID" value="AAZ97088.1"/>
    <property type="molecule type" value="Genomic_DNA"/>
</dbReference>
<dbReference type="RefSeq" id="WP_011311647.1">
    <property type="nucleotide sequence ID" value="NC_007404.1"/>
</dbReference>
<dbReference type="SMR" id="Q3SJR2"/>
<dbReference type="STRING" id="292415.Tbd_1135"/>
<dbReference type="KEGG" id="tbd:Tbd_1135"/>
<dbReference type="eggNOG" id="COG1109">
    <property type="taxonomic scope" value="Bacteria"/>
</dbReference>
<dbReference type="HOGENOM" id="CLU_016950_7_0_4"/>
<dbReference type="OrthoDB" id="9803322at2"/>
<dbReference type="Proteomes" id="UP000008291">
    <property type="component" value="Chromosome"/>
</dbReference>
<dbReference type="GO" id="GO:0005829">
    <property type="term" value="C:cytosol"/>
    <property type="evidence" value="ECO:0007669"/>
    <property type="project" value="TreeGrafter"/>
</dbReference>
<dbReference type="GO" id="GO:0000287">
    <property type="term" value="F:magnesium ion binding"/>
    <property type="evidence" value="ECO:0007669"/>
    <property type="project" value="UniProtKB-UniRule"/>
</dbReference>
<dbReference type="GO" id="GO:0008966">
    <property type="term" value="F:phosphoglucosamine mutase activity"/>
    <property type="evidence" value="ECO:0007669"/>
    <property type="project" value="UniProtKB-UniRule"/>
</dbReference>
<dbReference type="GO" id="GO:0004615">
    <property type="term" value="F:phosphomannomutase activity"/>
    <property type="evidence" value="ECO:0007669"/>
    <property type="project" value="TreeGrafter"/>
</dbReference>
<dbReference type="GO" id="GO:0005975">
    <property type="term" value="P:carbohydrate metabolic process"/>
    <property type="evidence" value="ECO:0007669"/>
    <property type="project" value="InterPro"/>
</dbReference>
<dbReference type="GO" id="GO:0009252">
    <property type="term" value="P:peptidoglycan biosynthetic process"/>
    <property type="evidence" value="ECO:0007669"/>
    <property type="project" value="TreeGrafter"/>
</dbReference>
<dbReference type="GO" id="GO:0006048">
    <property type="term" value="P:UDP-N-acetylglucosamine biosynthetic process"/>
    <property type="evidence" value="ECO:0007669"/>
    <property type="project" value="TreeGrafter"/>
</dbReference>
<dbReference type="CDD" id="cd05802">
    <property type="entry name" value="GlmM"/>
    <property type="match status" value="1"/>
</dbReference>
<dbReference type="FunFam" id="3.30.310.50:FF:000001">
    <property type="entry name" value="Phosphoglucosamine mutase"/>
    <property type="match status" value="1"/>
</dbReference>
<dbReference type="FunFam" id="3.40.120.10:FF:000001">
    <property type="entry name" value="Phosphoglucosamine mutase"/>
    <property type="match status" value="1"/>
</dbReference>
<dbReference type="FunFam" id="3.40.120.10:FF:000003">
    <property type="entry name" value="Phosphoglucosamine mutase"/>
    <property type="match status" value="1"/>
</dbReference>
<dbReference type="Gene3D" id="3.40.120.10">
    <property type="entry name" value="Alpha-D-Glucose-1,6-Bisphosphate, subunit A, domain 3"/>
    <property type="match status" value="3"/>
</dbReference>
<dbReference type="Gene3D" id="3.30.310.50">
    <property type="entry name" value="Alpha-D-phosphohexomutase, C-terminal domain"/>
    <property type="match status" value="1"/>
</dbReference>
<dbReference type="HAMAP" id="MF_01554_B">
    <property type="entry name" value="GlmM_B"/>
    <property type="match status" value="1"/>
</dbReference>
<dbReference type="InterPro" id="IPR005844">
    <property type="entry name" value="A-D-PHexomutase_a/b/a-I"/>
</dbReference>
<dbReference type="InterPro" id="IPR016055">
    <property type="entry name" value="A-D-PHexomutase_a/b/a-I/II/III"/>
</dbReference>
<dbReference type="InterPro" id="IPR005845">
    <property type="entry name" value="A-D-PHexomutase_a/b/a-II"/>
</dbReference>
<dbReference type="InterPro" id="IPR005846">
    <property type="entry name" value="A-D-PHexomutase_a/b/a-III"/>
</dbReference>
<dbReference type="InterPro" id="IPR005843">
    <property type="entry name" value="A-D-PHexomutase_C"/>
</dbReference>
<dbReference type="InterPro" id="IPR036900">
    <property type="entry name" value="A-D-PHexomutase_C_sf"/>
</dbReference>
<dbReference type="InterPro" id="IPR016066">
    <property type="entry name" value="A-D-PHexomutase_CS"/>
</dbReference>
<dbReference type="InterPro" id="IPR005841">
    <property type="entry name" value="Alpha-D-phosphohexomutase_SF"/>
</dbReference>
<dbReference type="InterPro" id="IPR006352">
    <property type="entry name" value="GlmM_bact"/>
</dbReference>
<dbReference type="InterPro" id="IPR050060">
    <property type="entry name" value="Phosphoglucosamine_mutase"/>
</dbReference>
<dbReference type="NCBIfam" id="TIGR01455">
    <property type="entry name" value="glmM"/>
    <property type="match status" value="1"/>
</dbReference>
<dbReference type="NCBIfam" id="NF008139">
    <property type="entry name" value="PRK10887.1"/>
    <property type="match status" value="1"/>
</dbReference>
<dbReference type="PANTHER" id="PTHR42946:SF1">
    <property type="entry name" value="PHOSPHOGLUCOMUTASE (ALPHA-D-GLUCOSE-1,6-BISPHOSPHATE-DEPENDENT)"/>
    <property type="match status" value="1"/>
</dbReference>
<dbReference type="PANTHER" id="PTHR42946">
    <property type="entry name" value="PHOSPHOHEXOSE MUTASE"/>
    <property type="match status" value="1"/>
</dbReference>
<dbReference type="Pfam" id="PF02878">
    <property type="entry name" value="PGM_PMM_I"/>
    <property type="match status" value="1"/>
</dbReference>
<dbReference type="Pfam" id="PF02879">
    <property type="entry name" value="PGM_PMM_II"/>
    <property type="match status" value="1"/>
</dbReference>
<dbReference type="Pfam" id="PF02880">
    <property type="entry name" value="PGM_PMM_III"/>
    <property type="match status" value="1"/>
</dbReference>
<dbReference type="Pfam" id="PF00408">
    <property type="entry name" value="PGM_PMM_IV"/>
    <property type="match status" value="1"/>
</dbReference>
<dbReference type="PRINTS" id="PR00509">
    <property type="entry name" value="PGMPMM"/>
</dbReference>
<dbReference type="SUPFAM" id="SSF55957">
    <property type="entry name" value="Phosphoglucomutase, C-terminal domain"/>
    <property type="match status" value="1"/>
</dbReference>
<dbReference type="SUPFAM" id="SSF53738">
    <property type="entry name" value="Phosphoglucomutase, first 3 domains"/>
    <property type="match status" value="3"/>
</dbReference>
<dbReference type="PROSITE" id="PS00710">
    <property type="entry name" value="PGM_PMM"/>
    <property type="match status" value="1"/>
</dbReference>
<keyword id="KW-0413">Isomerase</keyword>
<keyword id="KW-0460">Magnesium</keyword>
<keyword id="KW-0479">Metal-binding</keyword>
<keyword id="KW-0597">Phosphoprotein</keyword>
<keyword id="KW-1185">Reference proteome</keyword>